<name>ATPB_ARIMA</name>
<comment type="function">
    <text evidence="1">Produces ATP from ADP in the presence of a proton gradient across the membrane. The catalytic sites are hosted primarily by the beta subunits.</text>
</comment>
<comment type="catalytic activity">
    <reaction evidence="1">
        <text>ATP + H2O + 4 H(+)(in) = ADP + phosphate + 5 H(+)(out)</text>
        <dbReference type="Rhea" id="RHEA:57720"/>
        <dbReference type="ChEBI" id="CHEBI:15377"/>
        <dbReference type="ChEBI" id="CHEBI:15378"/>
        <dbReference type="ChEBI" id="CHEBI:30616"/>
        <dbReference type="ChEBI" id="CHEBI:43474"/>
        <dbReference type="ChEBI" id="CHEBI:456216"/>
        <dbReference type="EC" id="7.1.2.2"/>
    </reaction>
</comment>
<comment type="subunit">
    <text evidence="1">F-type ATPases have 2 components, CF(1) - the catalytic core - and CF(0) - the membrane proton channel. CF(1) has five subunits: alpha(3), beta(3), gamma(1), delta(1), epsilon(1). CF(0) has four main subunits: a(1), b(1), b'(1) and c(9-12).</text>
</comment>
<comment type="subcellular location">
    <subcellularLocation>
        <location evidence="1">Plastid</location>
        <location evidence="1">Chloroplast thylakoid membrane</location>
        <topology evidence="1">Peripheral membrane protein</topology>
    </subcellularLocation>
</comment>
<comment type="similarity">
    <text evidence="1">Belongs to the ATPase alpha/beta chains family.</text>
</comment>
<reference key="1">
    <citation type="journal article" date="2000" name="Syst. Biol.">
        <title>Phylogenetics of flowering plants based upon a combined analysis of plastid atpB and rbcL gene sequences.</title>
        <authorList>
            <person name="Savolainen V."/>
            <person name="Chase M.W."/>
            <person name="Morton C.M."/>
            <person name="Hoot S.B."/>
            <person name="Soltis D.E."/>
            <person name="Bayer C."/>
            <person name="Fay M.F."/>
            <person name="de Bruijn A."/>
            <person name="Sullivan S."/>
            <person name="Qiu Y.-L."/>
        </authorList>
    </citation>
    <scope>NUCLEOTIDE SEQUENCE [GENOMIC DNA]</scope>
</reference>
<reference key="2">
    <citation type="submission" date="2002-07" db="EMBL/GenBank/DDBJ databases">
        <title>Parsing out signal and noise for seed-plant phylogenetic inference.</title>
        <authorList>
            <person name="Graham S.W."/>
            <person name="Rai H.S."/>
            <person name="Ikegami K."/>
            <person name="Reeves P.A."/>
            <person name="Olmstead R.G."/>
        </authorList>
    </citation>
    <scope>NUCLEOTIDE SEQUENCE [GENOMIC DNA]</scope>
</reference>
<keyword id="KW-0066">ATP synthesis</keyword>
<keyword id="KW-0067">ATP-binding</keyword>
<keyword id="KW-0139">CF(1)</keyword>
<keyword id="KW-0150">Chloroplast</keyword>
<keyword id="KW-0375">Hydrogen ion transport</keyword>
<keyword id="KW-0406">Ion transport</keyword>
<keyword id="KW-0472">Membrane</keyword>
<keyword id="KW-0547">Nucleotide-binding</keyword>
<keyword id="KW-0934">Plastid</keyword>
<keyword id="KW-0793">Thylakoid</keyword>
<keyword id="KW-1278">Translocase</keyword>
<keyword id="KW-0813">Transport</keyword>
<proteinExistence type="inferred from homology"/>
<organism>
    <name type="scientific">Aristolochia macrophylla</name>
    <name type="common">Dutchman's pipe vine</name>
    <name type="synonym">Isotrema macrophyllum</name>
    <dbReference type="NCBI Taxonomy" id="12949"/>
    <lineage>
        <taxon>Eukaryota</taxon>
        <taxon>Viridiplantae</taxon>
        <taxon>Streptophyta</taxon>
        <taxon>Embryophyta</taxon>
        <taxon>Tracheophyta</taxon>
        <taxon>Spermatophyta</taxon>
        <taxon>Magnoliopsida</taxon>
        <taxon>Magnoliidae</taxon>
        <taxon>Piperales</taxon>
        <taxon>Aristolochiaceae</taxon>
        <taxon>Aristolochia</taxon>
    </lineage>
</organism>
<accession>Q9MRV8</accession>
<feature type="chain" id="PRO_0000254442" description="ATP synthase subunit beta, chloroplastic">
    <location>
        <begin position="1"/>
        <end position="498"/>
    </location>
</feature>
<feature type="binding site" evidence="1">
    <location>
        <begin position="172"/>
        <end position="179"/>
    </location>
    <ligand>
        <name>ATP</name>
        <dbReference type="ChEBI" id="CHEBI:30616"/>
    </ligand>
</feature>
<sequence>MRINPTTSGPGVSTLEKKNPGRXAQIIGPVLDVAFPPGKMPNIYNALVVKGRDTVGQQVNVTCEVQQLLGNNRVRAVAMSATDGLMRGMEVIDTGAPLSVPVGGATLGRIFNVLGEPVDNLGPVDTRTTFPIHRSAPAFIQLDTKLSIFETGIKVVDLLAPYRRGGKIGLFGGAGVGKTVLIMELINNIAKAHGGVSVFGGVGERTREGNDLYMEMKESGVINEQNLAESKVALVYGQMNEPPGARMRVGLTALTMAEYFRDVNEQDVLLFIDNIFRFVQAGSEVSALLGRMPSAVGYQPTLSTEMGSLQERITSTKEGSITSIQAVYVPADDLTDPAPATTFAHLDATTVLSRGLAAKGIYPAVDPLDSTSTMLQPRIVGEEHYETAQRVKQTSQRYKELQDIIAILGLDELSEEDRLTVARARKIERFLSQPFFVAEVFTGSPGKYVGLAETIRGFQLILSGELDGLPEQAFYLVGNIDEATAKAMNLDVESXLKK</sequence>
<protein>
    <recommendedName>
        <fullName evidence="1">ATP synthase subunit beta, chloroplastic</fullName>
        <ecNumber evidence="1">7.1.2.2</ecNumber>
    </recommendedName>
    <alternativeName>
        <fullName evidence="1">ATP synthase F1 sector subunit beta</fullName>
    </alternativeName>
    <alternativeName>
        <fullName evidence="1">F-ATPase subunit beta</fullName>
    </alternativeName>
</protein>
<gene>
    <name evidence="1" type="primary">atpB</name>
</gene>
<geneLocation type="chloroplast"/>
<evidence type="ECO:0000255" key="1">
    <source>
        <dbReference type="HAMAP-Rule" id="MF_01347"/>
    </source>
</evidence>
<dbReference type="EC" id="7.1.2.2" evidence="1"/>
<dbReference type="EMBL" id="AJ235399">
    <property type="protein sequence ID" value="CAB89699.1"/>
    <property type="molecule type" value="Genomic_DNA"/>
</dbReference>
<dbReference type="EMBL" id="AF528845">
    <property type="protein sequence ID" value="AAQ09233.1"/>
    <property type="molecule type" value="Genomic_DNA"/>
</dbReference>
<dbReference type="GO" id="GO:0009535">
    <property type="term" value="C:chloroplast thylakoid membrane"/>
    <property type="evidence" value="ECO:0007669"/>
    <property type="project" value="UniProtKB-SubCell"/>
</dbReference>
<dbReference type="GO" id="GO:0005739">
    <property type="term" value="C:mitochondrion"/>
    <property type="evidence" value="ECO:0007669"/>
    <property type="project" value="GOC"/>
</dbReference>
<dbReference type="GO" id="GO:0045259">
    <property type="term" value="C:proton-transporting ATP synthase complex"/>
    <property type="evidence" value="ECO:0007669"/>
    <property type="project" value="UniProtKB-KW"/>
</dbReference>
<dbReference type="GO" id="GO:0005524">
    <property type="term" value="F:ATP binding"/>
    <property type="evidence" value="ECO:0007669"/>
    <property type="project" value="UniProtKB-UniRule"/>
</dbReference>
<dbReference type="GO" id="GO:0016887">
    <property type="term" value="F:ATP hydrolysis activity"/>
    <property type="evidence" value="ECO:0007669"/>
    <property type="project" value="InterPro"/>
</dbReference>
<dbReference type="GO" id="GO:0046933">
    <property type="term" value="F:proton-transporting ATP synthase activity, rotational mechanism"/>
    <property type="evidence" value="ECO:0007669"/>
    <property type="project" value="UniProtKB-UniRule"/>
</dbReference>
<dbReference type="GO" id="GO:0042776">
    <property type="term" value="P:proton motive force-driven mitochondrial ATP synthesis"/>
    <property type="evidence" value="ECO:0007669"/>
    <property type="project" value="TreeGrafter"/>
</dbReference>
<dbReference type="CDD" id="cd18110">
    <property type="entry name" value="ATP-synt_F1_beta_C"/>
    <property type="match status" value="1"/>
</dbReference>
<dbReference type="CDD" id="cd18115">
    <property type="entry name" value="ATP-synt_F1_beta_N"/>
    <property type="match status" value="1"/>
</dbReference>
<dbReference type="CDD" id="cd01133">
    <property type="entry name" value="F1-ATPase_beta_CD"/>
    <property type="match status" value="1"/>
</dbReference>
<dbReference type="FunFam" id="1.10.1140.10:FF:000001">
    <property type="entry name" value="ATP synthase subunit beta"/>
    <property type="match status" value="1"/>
</dbReference>
<dbReference type="FunFam" id="3.40.50.12240:FF:000006">
    <property type="entry name" value="ATP synthase subunit beta"/>
    <property type="match status" value="1"/>
</dbReference>
<dbReference type="FunFam" id="3.40.50.300:FF:000004">
    <property type="entry name" value="ATP synthase subunit beta"/>
    <property type="match status" value="1"/>
</dbReference>
<dbReference type="FunFam" id="2.40.10.170:FF:000002">
    <property type="entry name" value="ATP synthase subunit beta, chloroplastic"/>
    <property type="match status" value="1"/>
</dbReference>
<dbReference type="Gene3D" id="2.40.10.170">
    <property type="match status" value="1"/>
</dbReference>
<dbReference type="Gene3D" id="1.10.1140.10">
    <property type="entry name" value="Bovine Mitochondrial F1-atpase, Atp Synthase Beta Chain, Chain D, domain 3"/>
    <property type="match status" value="1"/>
</dbReference>
<dbReference type="Gene3D" id="3.40.50.300">
    <property type="entry name" value="P-loop containing nucleotide triphosphate hydrolases"/>
    <property type="match status" value="1"/>
</dbReference>
<dbReference type="HAMAP" id="MF_01347">
    <property type="entry name" value="ATP_synth_beta_bact"/>
    <property type="match status" value="1"/>
</dbReference>
<dbReference type="InterPro" id="IPR003593">
    <property type="entry name" value="AAA+_ATPase"/>
</dbReference>
<dbReference type="InterPro" id="IPR055190">
    <property type="entry name" value="ATP-synt_VA_C"/>
</dbReference>
<dbReference type="InterPro" id="IPR005722">
    <property type="entry name" value="ATP_synth_F1_bsu"/>
</dbReference>
<dbReference type="InterPro" id="IPR020003">
    <property type="entry name" value="ATPase_a/bsu_AS"/>
</dbReference>
<dbReference type="InterPro" id="IPR050053">
    <property type="entry name" value="ATPase_alpha/beta_chains"/>
</dbReference>
<dbReference type="InterPro" id="IPR004100">
    <property type="entry name" value="ATPase_F1/V1/A1_a/bsu_N"/>
</dbReference>
<dbReference type="InterPro" id="IPR036121">
    <property type="entry name" value="ATPase_F1/V1/A1_a/bsu_N_sf"/>
</dbReference>
<dbReference type="InterPro" id="IPR000194">
    <property type="entry name" value="ATPase_F1/V1/A1_a/bsu_nucl-bd"/>
</dbReference>
<dbReference type="InterPro" id="IPR024034">
    <property type="entry name" value="ATPase_F1/V1_b/a_C"/>
</dbReference>
<dbReference type="InterPro" id="IPR027417">
    <property type="entry name" value="P-loop_NTPase"/>
</dbReference>
<dbReference type="NCBIfam" id="TIGR01039">
    <property type="entry name" value="atpD"/>
    <property type="match status" value="1"/>
</dbReference>
<dbReference type="PANTHER" id="PTHR15184">
    <property type="entry name" value="ATP SYNTHASE"/>
    <property type="match status" value="1"/>
</dbReference>
<dbReference type="PANTHER" id="PTHR15184:SF71">
    <property type="entry name" value="ATP SYNTHASE SUBUNIT BETA, MITOCHONDRIAL"/>
    <property type="match status" value="1"/>
</dbReference>
<dbReference type="Pfam" id="PF00006">
    <property type="entry name" value="ATP-synt_ab"/>
    <property type="match status" value="1"/>
</dbReference>
<dbReference type="Pfam" id="PF02874">
    <property type="entry name" value="ATP-synt_ab_N"/>
    <property type="match status" value="1"/>
</dbReference>
<dbReference type="Pfam" id="PF22919">
    <property type="entry name" value="ATP-synt_VA_C"/>
    <property type="match status" value="1"/>
</dbReference>
<dbReference type="SMART" id="SM00382">
    <property type="entry name" value="AAA"/>
    <property type="match status" value="1"/>
</dbReference>
<dbReference type="SUPFAM" id="SSF47917">
    <property type="entry name" value="C-terminal domain of alpha and beta subunits of F1 ATP synthase"/>
    <property type="match status" value="1"/>
</dbReference>
<dbReference type="SUPFAM" id="SSF50615">
    <property type="entry name" value="N-terminal domain of alpha and beta subunits of F1 ATP synthase"/>
    <property type="match status" value="1"/>
</dbReference>
<dbReference type="SUPFAM" id="SSF52540">
    <property type="entry name" value="P-loop containing nucleoside triphosphate hydrolases"/>
    <property type="match status" value="1"/>
</dbReference>
<dbReference type="PROSITE" id="PS00152">
    <property type="entry name" value="ATPASE_ALPHA_BETA"/>
    <property type="match status" value="1"/>
</dbReference>